<organism>
    <name type="scientific">Hydrogenovibrio crunogenus (strain DSM 25203 / XCL-2)</name>
    <name type="common">Thiomicrospira crunogena</name>
    <dbReference type="NCBI Taxonomy" id="317025"/>
    <lineage>
        <taxon>Bacteria</taxon>
        <taxon>Pseudomonadati</taxon>
        <taxon>Pseudomonadota</taxon>
        <taxon>Gammaproteobacteria</taxon>
        <taxon>Thiotrichales</taxon>
        <taxon>Piscirickettsiaceae</taxon>
        <taxon>Hydrogenovibrio</taxon>
    </lineage>
</organism>
<feature type="chain" id="PRO_1000017207" description="tRNA pseudouridine synthase A">
    <location>
        <begin position="1"/>
        <end position="262"/>
    </location>
</feature>
<feature type="active site" description="Nucleophile" evidence="1">
    <location>
        <position position="52"/>
    </location>
</feature>
<feature type="binding site" evidence="1">
    <location>
        <position position="110"/>
    </location>
    <ligand>
        <name>substrate</name>
    </ligand>
</feature>
<protein>
    <recommendedName>
        <fullName evidence="1">tRNA pseudouridine synthase A</fullName>
        <ecNumber evidence="1">5.4.99.12</ecNumber>
    </recommendedName>
    <alternativeName>
        <fullName evidence="1">tRNA pseudouridine(38-40) synthase</fullName>
    </alternativeName>
    <alternativeName>
        <fullName evidence="1">tRNA pseudouridylate synthase I</fullName>
    </alternativeName>
    <alternativeName>
        <fullName evidence="1">tRNA-uridine isomerase I</fullName>
    </alternativeName>
</protein>
<sequence length="262" mass="29556">MTLLAIGIEYQGTAYCGWQHQKHCDSVQQQLEKALSYIADEPIGLNCAGRTDTGVHAIGQIAHFETNASRPDKAWIQGVNTQLPNDIRVTWVKPMPEDFHARFSAVARQYRYVIFNRPVHSAILANRVTWENRPLDVKKMHAAAQDLLGENDFSSFRAAGCQASHANRNVQYLQVSRQGNFVFVDIQANAFLHHMVRNIVGTLLEVGRLDKPVEWVSELLKKQDRTQAGMTAPAAGLYFVNALYPESFELPRVVLDELLWQA</sequence>
<accession>Q31HH6</accession>
<dbReference type="EC" id="5.4.99.12" evidence="1"/>
<dbReference type="EMBL" id="CP000109">
    <property type="protein sequence ID" value="ABB41397.1"/>
    <property type="molecule type" value="Genomic_DNA"/>
</dbReference>
<dbReference type="SMR" id="Q31HH6"/>
<dbReference type="STRING" id="317025.Tcr_0801"/>
<dbReference type="KEGG" id="tcx:Tcr_0801"/>
<dbReference type="eggNOG" id="COG0101">
    <property type="taxonomic scope" value="Bacteria"/>
</dbReference>
<dbReference type="HOGENOM" id="CLU_014673_0_2_6"/>
<dbReference type="OrthoDB" id="9811823at2"/>
<dbReference type="GO" id="GO:0003723">
    <property type="term" value="F:RNA binding"/>
    <property type="evidence" value="ECO:0007669"/>
    <property type="project" value="InterPro"/>
</dbReference>
<dbReference type="GO" id="GO:0160147">
    <property type="term" value="F:tRNA pseudouridine(38-40) synthase activity"/>
    <property type="evidence" value="ECO:0007669"/>
    <property type="project" value="UniProtKB-EC"/>
</dbReference>
<dbReference type="GO" id="GO:0031119">
    <property type="term" value="P:tRNA pseudouridine synthesis"/>
    <property type="evidence" value="ECO:0007669"/>
    <property type="project" value="UniProtKB-UniRule"/>
</dbReference>
<dbReference type="CDD" id="cd02570">
    <property type="entry name" value="PseudoU_synth_EcTruA"/>
    <property type="match status" value="1"/>
</dbReference>
<dbReference type="FunFam" id="3.30.70.580:FF:000001">
    <property type="entry name" value="tRNA pseudouridine synthase A"/>
    <property type="match status" value="1"/>
</dbReference>
<dbReference type="Gene3D" id="3.30.70.660">
    <property type="entry name" value="Pseudouridine synthase I, catalytic domain, C-terminal subdomain"/>
    <property type="match status" value="1"/>
</dbReference>
<dbReference type="Gene3D" id="3.30.70.580">
    <property type="entry name" value="Pseudouridine synthase I, catalytic domain, N-terminal subdomain"/>
    <property type="match status" value="1"/>
</dbReference>
<dbReference type="HAMAP" id="MF_00171">
    <property type="entry name" value="TruA"/>
    <property type="match status" value="1"/>
</dbReference>
<dbReference type="InterPro" id="IPR020103">
    <property type="entry name" value="PsdUridine_synth_cat_dom_sf"/>
</dbReference>
<dbReference type="InterPro" id="IPR001406">
    <property type="entry name" value="PsdUridine_synth_TruA"/>
</dbReference>
<dbReference type="InterPro" id="IPR020097">
    <property type="entry name" value="PsdUridine_synth_TruA_a/b_dom"/>
</dbReference>
<dbReference type="InterPro" id="IPR020095">
    <property type="entry name" value="PsdUridine_synth_TruA_C"/>
</dbReference>
<dbReference type="InterPro" id="IPR020094">
    <property type="entry name" value="TruA/RsuA/RluB/E/F_N"/>
</dbReference>
<dbReference type="NCBIfam" id="TIGR00071">
    <property type="entry name" value="hisT_truA"/>
    <property type="match status" value="1"/>
</dbReference>
<dbReference type="PANTHER" id="PTHR11142">
    <property type="entry name" value="PSEUDOURIDYLATE SYNTHASE"/>
    <property type="match status" value="1"/>
</dbReference>
<dbReference type="PANTHER" id="PTHR11142:SF0">
    <property type="entry name" value="TRNA PSEUDOURIDINE SYNTHASE-LIKE 1"/>
    <property type="match status" value="1"/>
</dbReference>
<dbReference type="Pfam" id="PF01416">
    <property type="entry name" value="PseudoU_synth_1"/>
    <property type="match status" value="2"/>
</dbReference>
<dbReference type="PIRSF" id="PIRSF001430">
    <property type="entry name" value="tRNA_psdUrid_synth"/>
    <property type="match status" value="1"/>
</dbReference>
<dbReference type="SUPFAM" id="SSF55120">
    <property type="entry name" value="Pseudouridine synthase"/>
    <property type="match status" value="1"/>
</dbReference>
<proteinExistence type="inferred from homology"/>
<evidence type="ECO:0000255" key="1">
    <source>
        <dbReference type="HAMAP-Rule" id="MF_00171"/>
    </source>
</evidence>
<name>TRUA_HYDCU</name>
<gene>
    <name evidence="1" type="primary">truA</name>
    <name type="ordered locus">Tcr_0801</name>
</gene>
<keyword id="KW-0413">Isomerase</keyword>
<keyword id="KW-0819">tRNA processing</keyword>
<reference key="1">
    <citation type="journal article" date="2006" name="PLoS Biol.">
        <title>The genome of deep-sea vent chemolithoautotroph Thiomicrospira crunogena XCL-2.</title>
        <authorList>
            <person name="Scott K.M."/>
            <person name="Sievert S.M."/>
            <person name="Abril F.N."/>
            <person name="Ball L.A."/>
            <person name="Barrett C.J."/>
            <person name="Blake R.A."/>
            <person name="Boller A.J."/>
            <person name="Chain P.S.G."/>
            <person name="Clark J.A."/>
            <person name="Davis C.R."/>
            <person name="Detter C."/>
            <person name="Do K.F."/>
            <person name="Dobrinski K.P."/>
            <person name="Faza B.I."/>
            <person name="Fitzpatrick K.A."/>
            <person name="Freyermuth S.K."/>
            <person name="Harmer T.L."/>
            <person name="Hauser L.J."/>
            <person name="Huegler M."/>
            <person name="Kerfeld C.A."/>
            <person name="Klotz M.G."/>
            <person name="Kong W.W."/>
            <person name="Land M."/>
            <person name="Lapidus A."/>
            <person name="Larimer F.W."/>
            <person name="Longo D.L."/>
            <person name="Lucas S."/>
            <person name="Malfatti S.A."/>
            <person name="Massey S.E."/>
            <person name="Martin D.D."/>
            <person name="McCuddin Z."/>
            <person name="Meyer F."/>
            <person name="Moore J.L."/>
            <person name="Ocampo L.H. Jr."/>
            <person name="Paul J.H."/>
            <person name="Paulsen I.T."/>
            <person name="Reep D.K."/>
            <person name="Ren Q."/>
            <person name="Ross R.L."/>
            <person name="Sato P.Y."/>
            <person name="Thomas P."/>
            <person name="Tinkham L.E."/>
            <person name="Zeruth G.T."/>
        </authorList>
    </citation>
    <scope>NUCLEOTIDE SEQUENCE [LARGE SCALE GENOMIC DNA]</scope>
    <source>
        <strain>DSM 25203 / XCL-2</strain>
    </source>
</reference>
<comment type="function">
    <text evidence="1">Formation of pseudouridine at positions 38, 39 and 40 in the anticodon stem and loop of transfer RNAs.</text>
</comment>
<comment type="catalytic activity">
    <reaction evidence="1">
        <text>uridine(38/39/40) in tRNA = pseudouridine(38/39/40) in tRNA</text>
        <dbReference type="Rhea" id="RHEA:22376"/>
        <dbReference type="Rhea" id="RHEA-COMP:10085"/>
        <dbReference type="Rhea" id="RHEA-COMP:10087"/>
        <dbReference type="ChEBI" id="CHEBI:65314"/>
        <dbReference type="ChEBI" id="CHEBI:65315"/>
        <dbReference type="EC" id="5.4.99.12"/>
    </reaction>
</comment>
<comment type="subunit">
    <text evidence="1">Homodimer.</text>
</comment>
<comment type="similarity">
    <text evidence="1">Belongs to the tRNA pseudouridine synthase TruA family.</text>
</comment>